<accession>Q9LE82</accession>
<dbReference type="EMBL" id="AF214559">
    <property type="protein sequence ID" value="AAF25947.1"/>
    <property type="molecule type" value="mRNA"/>
</dbReference>
<dbReference type="EMBL" id="AL163816">
    <property type="protein sequence ID" value="CAB87758.1"/>
    <property type="molecule type" value="Genomic_DNA"/>
</dbReference>
<dbReference type="EMBL" id="CP002686">
    <property type="protein sequence ID" value="AEE80438.1"/>
    <property type="molecule type" value="Genomic_DNA"/>
</dbReference>
<dbReference type="EMBL" id="CP002686">
    <property type="protein sequence ID" value="AEE80439.1"/>
    <property type="molecule type" value="Genomic_DNA"/>
</dbReference>
<dbReference type="EMBL" id="AY034918">
    <property type="protein sequence ID" value="AAK59425.1"/>
    <property type="molecule type" value="mRNA"/>
</dbReference>
<dbReference type="EMBL" id="AY150448">
    <property type="protein sequence ID" value="AAN12889.1"/>
    <property type="molecule type" value="mRNA"/>
</dbReference>
<dbReference type="PIR" id="T48102">
    <property type="entry name" value="T48102"/>
</dbReference>
<dbReference type="RefSeq" id="NP_001190166.1">
    <property type="nucleotide sequence ID" value="NM_001203237.1"/>
</dbReference>
<dbReference type="RefSeq" id="NP_191872.1">
    <property type="nucleotide sequence ID" value="NM_116178.3"/>
</dbReference>
<dbReference type="SMR" id="Q9LE82"/>
<dbReference type="BioGRID" id="10802">
    <property type="interactions" value="4"/>
</dbReference>
<dbReference type="DIP" id="DIP-46423N"/>
<dbReference type="FunCoup" id="Q9LE82">
    <property type="interactions" value="941"/>
</dbReference>
<dbReference type="IntAct" id="Q9LE82">
    <property type="interactions" value="7"/>
</dbReference>
<dbReference type="STRING" id="3702.Q9LE82"/>
<dbReference type="iPTMnet" id="Q9LE82"/>
<dbReference type="PaxDb" id="3702-AT3G63130.2"/>
<dbReference type="ProteomicsDB" id="234992"/>
<dbReference type="EnsemblPlants" id="AT3G63130.1">
    <property type="protein sequence ID" value="AT3G63130.1"/>
    <property type="gene ID" value="AT3G63130"/>
</dbReference>
<dbReference type="EnsemblPlants" id="AT3G63130.2">
    <property type="protein sequence ID" value="AT3G63130.2"/>
    <property type="gene ID" value="AT3G63130"/>
</dbReference>
<dbReference type="GeneID" id="825488"/>
<dbReference type="Gramene" id="AT3G63130.1">
    <property type="protein sequence ID" value="AT3G63130.1"/>
    <property type="gene ID" value="AT3G63130"/>
</dbReference>
<dbReference type="Gramene" id="AT3G63130.2">
    <property type="protein sequence ID" value="AT3G63130.2"/>
    <property type="gene ID" value="AT3G63130"/>
</dbReference>
<dbReference type="KEGG" id="ath:AT3G63130"/>
<dbReference type="Araport" id="AT3G63130"/>
<dbReference type="TAIR" id="AT3G63130">
    <property type="gene designation" value="RANGAP1"/>
</dbReference>
<dbReference type="eggNOG" id="KOG1909">
    <property type="taxonomic scope" value="Eukaryota"/>
</dbReference>
<dbReference type="HOGENOM" id="CLU_020837_0_0_1"/>
<dbReference type="InParanoid" id="Q9LE82"/>
<dbReference type="OMA" id="RDNMFGK"/>
<dbReference type="OrthoDB" id="120976at2759"/>
<dbReference type="PhylomeDB" id="Q9LE82"/>
<dbReference type="CD-CODE" id="33FCD62D">
    <property type="entry name" value="Centrosome"/>
</dbReference>
<dbReference type="CD-CODE" id="4299E36E">
    <property type="entry name" value="Nucleolus"/>
</dbReference>
<dbReference type="PRO" id="PR:Q9LE82"/>
<dbReference type="Proteomes" id="UP000006548">
    <property type="component" value="Chromosome 3"/>
</dbReference>
<dbReference type="ExpressionAtlas" id="Q9LE82">
    <property type="expression patterns" value="baseline and differential"/>
</dbReference>
<dbReference type="GO" id="GO:0032153">
    <property type="term" value="C:cell division site"/>
    <property type="evidence" value="ECO:0000314"/>
    <property type="project" value="TAIR"/>
</dbReference>
<dbReference type="GO" id="GO:0009504">
    <property type="term" value="C:cell plate"/>
    <property type="evidence" value="ECO:0000314"/>
    <property type="project" value="TAIR"/>
</dbReference>
<dbReference type="GO" id="GO:0005829">
    <property type="term" value="C:cytosol"/>
    <property type="evidence" value="ECO:0007005"/>
    <property type="project" value="TAIR"/>
</dbReference>
<dbReference type="GO" id="GO:0005635">
    <property type="term" value="C:nuclear envelope"/>
    <property type="evidence" value="ECO:0000314"/>
    <property type="project" value="UniProtKB"/>
</dbReference>
<dbReference type="GO" id="GO:0031965">
    <property type="term" value="C:nuclear membrane"/>
    <property type="evidence" value="ECO:0007669"/>
    <property type="project" value="UniProtKB-SubCell"/>
</dbReference>
<dbReference type="GO" id="GO:0009524">
    <property type="term" value="C:phragmoplast"/>
    <property type="evidence" value="ECO:0007669"/>
    <property type="project" value="UniProtKB-SubCell"/>
</dbReference>
<dbReference type="GO" id="GO:0005819">
    <property type="term" value="C:spindle"/>
    <property type="evidence" value="ECO:0007669"/>
    <property type="project" value="UniProtKB-SubCell"/>
</dbReference>
<dbReference type="GO" id="GO:0005096">
    <property type="term" value="F:GTPase activator activity"/>
    <property type="evidence" value="ECO:0007669"/>
    <property type="project" value="UniProtKB-KW"/>
</dbReference>
<dbReference type="GO" id="GO:0000911">
    <property type="term" value="P:cytokinesis by cell plate formation"/>
    <property type="evidence" value="ECO:0000315"/>
    <property type="project" value="TAIR"/>
</dbReference>
<dbReference type="GO" id="GO:0006606">
    <property type="term" value="P:protein import into nucleus"/>
    <property type="evidence" value="ECO:0000304"/>
    <property type="project" value="TAIR"/>
</dbReference>
<dbReference type="FunFam" id="1.10.246.200:FF:000001">
    <property type="entry name" value="WPP domain-containing protein 2"/>
    <property type="match status" value="1"/>
</dbReference>
<dbReference type="Gene3D" id="3.80.10.10">
    <property type="entry name" value="Ribonuclease Inhibitor"/>
    <property type="match status" value="1"/>
</dbReference>
<dbReference type="Gene3D" id="1.10.246.200">
    <property type="entry name" value="WPP domain"/>
    <property type="match status" value="1"/>
</dbReference>
<dbReference type="InterPro" id="IPR001611">
    <property type="entry name" value="Leu-rich_rpt"/>
</dbReference>
<dbReference type="InterPro" id="IPR032675">
    <property type="entry name" value="LRR_dom_sf"/>
</dbReference>
<dbReference type="InterPro" id="IPR045203">
    <property type="entry name" value="RanGAP1/2"/>
</dbReference>
<dbReference type="InterPro" id="IPR025265">
    <property type="entry name" value="WPP_dom"/>
</dbReference>
<dbReference type="InterPro" id="IPR038214">
    <property type="entry name" value="WPP_sf"/>
</dbReference>
<dbReference type="PANTHER" id="PTHR46761">
    <property type="entry name" value="RAN GTPASE-ACTIVATING PROTEIN 1"/>
    <property type="match status" value="1"/>
</dbReference>
<dbReference type="PANTHER" id="PTHR46761:SF2">
    <property type="entry name" value="RAN GTPASE-ACTIVATING PROTEIN 1"/>
    <property type="match status" value="1"/>
</dbReference>
<dbReference type="Pfam" id="PF13516">
    <property type="entry name" value="LRR_6"/>
    <property type="match status" value="3"/>
</dbReference>
<dbReference type="Pfam" id="PF13943">
    <property type="entry name" value="WPP"/>
    <property type="match status" value="1"/>
</dbReference>
<dbReference type="SMART" id="SM00368">
    <property type="entry name" value="LRR_RI"/>
    <property type="match status" value="10"/>
</dbReference>
<dbReference type="SUPFAM" id="SSF52047">
    <property type="entry name" value="RNI-like"/>
    <property type="match status" value="1"/>
</dbReference>
<sequence length="535" mass="58827">MDHSAKTTQNRVLSVKMWPPSKSTRLMLVERMTKNITTPSIFSRKYGLLSVEEAEQDAKRIEDLAFATANKHFQNEPDGDGTSAVHVYAKESSKLMLDVIKRGPQEESEVEVSKDGDVFFDISGGSRAFIEEEEARDLLRPLADPRNSYTKIRFSNRSFGSEAAKFAASVLSSIKDQLTEVDLSDFVAGRPEAEALEVMNMFSSALEGSKLRYLNLSDNALGEKGIRAFASLINSQHDLEELYLMNDGISEDAARAVRELLPSTDKIRVLQFHNNMTGDEGATAIAEIVRECPSLEDFRCSSTRIGSEGGVALAEALEHCSHLKKLDLRDNMFGVEGGIALAKTLSVLTHLTEIYMSYLNLEDEGTEALSEALLKSAPSLEVLELAGNDITVKSTGNLAACIASKQSLAKLNLSENELKDEGTILIAKAVEGHDQLVEVDLSTNMIRRAGARALAQTVVKKNTFKLLNINGNFISEEGIDEVNDMFKDCLDKLVPLDDNDPEGEDFEDEDEEEEGEDGNELESKLGSLKIKQGEE</sequence>
<feature type="chain" id="PRO_0000347214" description="RAN GTPase-activating protein 1">
    <location>
        <begin position="1"/>
        <end position="535"/>
    </location>
</feature>
<feature type="repeat" description="LRR 1">
    <location>
        <begin position="208"/>
        <end position="231"/>
    </location>
</feature>
<feature type="repeat" description="LRR 2">
    <location>
        <begin position="236"/>
        <end position="259"/>
    </location>
</feature>
<feature type="repeat" description="LRR 3">
    <location>
        <begin position="264"/>
        <end position="287"/>
    </location>
</feature>
<feature type="repeat" description="LRR 4">
    <location>
        <begin position="320"/>
        <end position="343"/>
    </location>
</feature>
<feature type="repeat" description="LRR 5">
    <location>
        <begin position="353"/>
        <end position="376"/>
    </location>
</feature>
<feature type="repeat" description="LRR 6">
    <location>
        <begin position="377"/>
        <end position="400"/>
    </location>
</feature>
<feature type="repeat" description="LRR 7">
    <location>
        <begin position="405"/>
        <end position="428"/>
    </location>
</feature>
<feature type="repeat" description="LRR 8">
    <location>
        <begin position="433"/>
        <end position="456"/>
    </location>
</feature>
<feature type="repeat" description="LRR 9">
    <location>
        <begin position="461"/>
        <end position="488"/>
    </location>
</feature>
<feature type="region of interest" description="WPP">
    <location>
        <begin position="1"/>
        <end position="115"/>
    </location>
</feature>
<feature type="region of interest" description="Disordered" evidence="2">
    <location>
        <begin position="493"/>
        <end position="535"/>
    </location>
</feature>
<feature type="compositionally biased region" description="Acidic residues" evidence="2">
    <location>
        <begin position="497"/>
        <end position="520"/>
    </location>
</feature>
<feature type="mutagenesis site" description="Loss of nuclear envelope localization." evidence="3">
    <original>WP</original>
    <variation>AA</variation>
    <location>
        <begin position="18"/>
        <end position="19"/>
    </location>
</feature>
<gene>
    <name type="primary">RANGAP1</name>
    <name type="ordered locus">At3g63130</name>
    <name type="ORF">T20O10.230</name>
</gene>
<comment type="function">
    <text evidence="4 7">GTPase activator for the nuclear Ras-related regulatory protein Ran, converting it to the putatively inactive GDP-bound state. Plays a role in spatial signaling during cell division.</text>
</comment>
<comment type="subunit">
    <text evidence="1 5 6 7">Homodimer (By similarity). Interacts with WIP1 through its WPP domain. Component of Ran complexes at least composed of WIT1 or WIT2, RANGAP1 or RANGAP2, and WIP1 or WIP2 or WIP3. Interacts directly with WIT1, WIP2 and WIP3. Interacts with POK1.</text>
</comment>
<comment type="interaction">
    <interactant intactId="EBI-1779351">
        <id>Q9LE82</id>
    </interactant>
    <interactant intactId="EBI-6881384">
        <id>Q27IK7</id>
        <label>KIN12C</label>
    </interactant>
    <organismsDiffer>false</organismsDiffer>
    <experiments>2</experiments>
</comment>
<comment type="interaction">
    <interactant intactId="EBI-1779351">
        <id>Q9LE82</id>
    </interactant>
    <interactant intactId="EBI-1779367">
        <id>Q8GXA4</id>
        <label>WIP1</label>
    </interactant>
    <organismsDiffer>false</organismsDiffer>
    <experiments>6</experiments>
</comment>
<comment type="interaction">
    <interactant intactId="EBI-1779351">
        <id>Q9LE82</id>
    </interactant>
    <interactant intactId="EBI-1796628">
        <id>Q8L7E5</id>
        <label>WIT1</label>
    </interactant>
    <organismsDiffer>false</organismsDiffer>
    <experiments>5</experiments>
</comment>
<comment type="subcellular location">
    <subcellularLocation>
        <location>Cytoplasm</location>
    </subcellularLocation>
    <subcellularLocation>
        <location evidence="8">Nucleus envelope</location>
    </subcellularLocation>
    <subcellularLocation>
        <location>Nucleus membrane</location>
        <topology>Peripheral membrane protein</topology>
        <orientation>Cytoplasmic side</orientation>
    </subcellularLocation>
    <subcellularLocation>
        <location>Cytoplasm</location>
        <location>Cytoskeleton</location>
        <location>Spindle</location>
    </subcellularLocation>
    <subcellularLocation>
        <location>Cytoplasm</location>
        <location>Cytoskeleton</location>
        <location>Phragmoplast</location>
    </subcellularLocation>
    <text>Localized in patchy areas at the nuclear envelope (NE) of interphase cells. Concentrates at the preprophase band (PPB) and remains associated with the cortical division site (CDS) during mitosis and cytokinesis. During mitosis, associates with mitotic spindles at the anaphase. Associated to the microtubular phragmoplast and the surface of the daughter nuclei at the telophase.</text>
</comment>
<comment type="domain">
    <text evidence="3">The WPP domain is required for the nuclear envelope localization.</text>
</comment>
<comment type="similarity">
    <text evidence="9">Belongs to the RNA1 family.</text>
</comment>
<organism>
    <name type="scientific">Arabidopsis thaliana</name>
    <name type="common">Mouse-ear cress</name>
    <dbReference type="NCBI Taxonomy" id="3702"/>
    <lineage>
        <taxon>Eukaryota</taxon>
        <taxon>Viridiplantae</taxon>
        <taxon>Streptophyta</taxon>
        <taxon>Embryophyta</taxon>
        <taxon>Tracheophyta</taxon>
        <taxon>Spermatophyta</taxon>
        <taxon>Magnoliopsida</taxon>
        <taxon>eudicotyledons</taxon>
        <taxon>Gunneridae</taxon>
        <taxon>Pentapetalae</taxon>
        <taxon>rosids</taxon>
        <taxon>malvids</taxon>
        <taxon>Brassicales</taxon>
        <taxon>Brassicaceae</taxon>
        <taxon>Camelineae</taxon>
        <taxon>Arabidopsis</taxon>
    </lineage>
</organism>
<protein>
    <recommendedName>
        <fullName>RAN GTPase-activating protein 1</fullName>
        <shortName>AtRanGAP1</shortName>
        <shortName>RanGAP1</shortName>
    </recommendedName>
</protein>
<proteinExistence type="evidence at protein level"/>
<evidence type="ECO:0000250" key="1"/>
<evidence type="ECO:0000256" key="2">
    <source>
        <dbReference type="SAM" id="MobiDB-lite"/>
    </source>
</evidence>
<evidence type="ECO:0000269" key="3">
    <source>
    </source>
</evidence>
<evidence type="ECO:0000269" key="4">
    <source>
    </source>
</evidence>
<evidence type="ECO:0000269" key="5">
    <source>
    </source>
</evidence>
<evidence type="ECO:0000269" key="6">
    <source>
    </source>
</evidence>
<evidence type="ECO:0000269" key="7">
    <source>
    </source>
</evidence>
<evidence type="ECO:0000269" key="8">
    <source>
    </source>
</evidence>
<evidence type="ECO:0000305" key="9"/>
<name>RAGP1_ARATH</name>
<reference key="1">
    <citation type="journal article" date="2002" name="Plant J.">
        <title>Plant RanGAPs are localized at the nuclear envelope in interphase and associated with microtubules in mitotic cells.</title>
        <authorList>
            <person name="Pay A."/>
            <person name="Resch K."/>
            <person name="Frohnmeyer H."/>
            <person name="Fejes E."/>
            <person name="Nagy F."/>
            <person name="Nick P."/>
        </authorList>
    </citation>
    <scope>NUCLEOTIDE SEQUENCE [MRNA]</scope>
    <scope>FUNCTION</scope>
    <scope>SUBCELLULAR LOCATION</scope>
    <source>
        <strain>cv. Columbia</strain>
    </source>
</reference>
<reference key="2">
    <citation type="journal article" date="2000" name="Nature">
        <title>Sequence and analysis of chromosome 3 of the plant Arabidopsis thaliana.</title>
        <authorList>
            <person name="Salanoubat M."/>
            <person name="Lemcke K."/>
            <person name="Rieger M."/>
            <person name="Ansorge W."/>
            <person name="Unseld M."/>
            <person name="Fartmann B."/>
            <person name="Valle G."/>
            <person name="Bloecker H."/>
            <person name="Perez-Alonso M."/>
            <person name="Obermaier B."/>
            <person name="Delseny M."/>
            <person name="Boutry M."/>
            <person name="Grivell L.A."/>
            <person name="Mache R."/>
            <person name="Puigdomenech P."/>
            <person name="De Simone V."/>
            <person name="Choisne N."/>
            <person name="Artiguenave F."/>
            <person name="Robert C."/>
            <person name="Brottier P."/>
            <person name="Wincker P."/>
            <person name="Cattolico L."/>
            <person name="Weissenbach J."/>
            <person name="Saurin W."/>
            <person name="Quetier F."/>
            <person name="Schaefer M."/>
            <person name="Mueller-Auer S."/>
            <person name="Gabel C."/>
            <person name="Fuchs M."/>
            <person name="Benes V."/>
            <person name="Wurmbach E."/>
            <person name="Drzonek H."/>
            <person name="Erfle H."/>
            <person name="Jordan N."/>
            <person name="Bangert S."/>
            <person name="Wiedelmann R."/>
            <person name="Kranz H."/>
            <person name="Voss H."/>
            <person name="Holland R."/>
            <person name="Brandt P."/>
            <person name="Nyakatura G."/>
            <person name="Vezzi A."/>
            <person name="D'Angelo M."/>
            <person name="Pallavicini A."/>
            <person name="Toppo S."/>
            <person name="Simionati B."/>
            <person name="Conrad A."/>
            <person name="Hornischer K."/>
            <person name="Kauer G."/>
            <person name="Loehnert T.-H."/>
            <person name="Nordsiek G."/>
            <person name="Reichelt J."/>
            <person name="Scharfe M."/>
            <person name="Schoen O."/>
            <person name="Bargues M."/>
            <person name="Terol J."/>
            <person name="Climent J."/>
            <person name="Navarro P."/>
            <person name="Collado C."/>
            <person name="Perez-Perez A."/>
            <person name="Ottenwaelder B."/>
            <person name="Duchemin D."/>
            <person name="Cooke R."/>
            <person name="Laudie M."/>
            <person name="Berger-Llauro C."/>
            <person name="Purnelle B."/>
            <person name="Masuy D."/>
            <person name="de Haan M."/>
            <person name="Maarse A.C."/>
            <person name="Alcaraz J.-P."/>
            <person name="Cottet A."/>
            <person name="Casacuberta E."/>
            <person name="Monfort A."/>
            <person name="Argiriou A."/>
            <person name="Flores M."/>
            <person name="Liguori R."/>
            <person name="Vitale D."/>
            <person name="Mannhaupt G."/>
            <person name="Haase D."/>
            <person name="Schoof H."/>
            <person name="Rudd S."/>
            <person name="Zaccaria P."/>
            <person name="Mewes H.-W."/>
            <person name="Mayer K.F.X."/>
            <person name="Kaul S."/>
            <person name="Town C.D."/>
            <person name="Koo H.L."/>
            <person name="Tallon L.J."/>
            <person name="Jenkins J."/>
            <person name="Rooney T."/>
            <person name="Rizzo M."/>
            <person name="Walts A."/>
            <person name="Utterback T."/>
            <person name="Fujii C.Y."/>
            <person name="Shea T.P."/>
            <person name="Creasy T.H."/>
            <person name="Haas B."/>
            <person name="Maiti R."/>
            <person name="Wu D."/>
            <person name="Peterson J."/>
            <person name="Van Aken S."/>
            <person name="Pai G."/>
            <person name="Militscher J."/>
            <person name="Sellers P."/>
            <person name="Gill J.E."/>
            <person name="Feldblyum T.V."/>
            <person name="Preuss D."/>
            <person name="Lin X."/>
            <person name="Nierman W.C."/>
            <person name="Salzberg S.L."/>
            <person name="White O."/>
            <person name="Venter J.C."/>
            <person name="Fraser C.M."/>
            <person name="Kaneko T."/>
            <person name="Nakamura Y."/>
            <person name="Sato S."/>
            <person name="Kato T."/>
            <person name="Asamizu E."/>
            <person name="Sasamoto S."/>
            <person name="Kimura T."/>
            <person name="Idesawa K."/>
            <person name="Kawashima K."/>
            <person name="Kishida Y."/>
            <person name="Kiyokawa C."/>
            <person name="Kohara M."/>
            <person name="Matsumoto M."/>
            <person name="Matsuno A."/>
            <person name="Muraki A."/>
            <person name="Nakayama S."/>
            <person name="Nakazaki N."/>
            <person name="Shinpo S."/>
            <person name="Takeuchi C."/>
            <person name="Wada T."/>
            <person name="Watanabe A."/>
            <person name="Yamada M."/>
            <person name="Yasuda M."/>
            <person name="Tabata S."/>
        </authorList>
    </citation>
    <scope>NUCLEOTIDE SEQUENCE [LARGE SCALE GENOMIC DNA]</scope>
    <source>
        <strain>cv. Columbia</strain>
    </source>
</reference>
<reference key="3">
    <citation type="journal article" date="2017" name="Plant J.">
        <title>Araport11: a complete reannotation of the Arabidopsis thaliana reference genome.</title>
        <authorList>
            <person name="Cheng C.Y."/>
            <person name="Krishnakumar V."/>
            <person name="Chan A.P."/>
            <person name="Thibaud-Nissen F."/>
            <person name="Schobel S."/>
            <person name="Town C.D."/>
        </authorList>
    </citation>
    <scope>GENOME REANNOTATION</scope>
    <source>
        <strain>cv. Columbia</strain>
    </source>
</reference>
<reference key="4">
    <citation type="journal article" date="2003" name="Science">
        <title>Empirical analysis of transcriptional activity in the Arabidopsis genome.</title>
        <authorList>
            <person name="Yamada K."/>
            <person name="Lim J."/>
            <person name="Dale J.M."/>
            <person name="Chen H."/>
            <person name="Shinn P."/>
            <person name="Palm C.J."/>
            <person name="Southwick A.M."/>
            <person name="Wu H.C."/>
            <person name="Kim C.J."/>
            <person name="Nguyen M."/>
            <person name="Pham P.K."/>
            <person name="Cheuk R.F."/>
            <person name="Karlin-Newmann G."/>
            <person name="Liu S.X."/>
            <person name="Lam B."/>
            <person name="Sakano H."/>
            <person name="Wu T."/>
            <person name="Yu G."/>
            <person name="Miranda M."/>
            <person name="Quach H.L."/>
            <person name="Tripp M."/>
            <person name="Chang C.H."/>
            <person name="Lee J.M."/>
            <person name="Toriumi M.J."/>
            <person name="Chan M.M."/>
            <person name="Tang C.C."/>
            <person name="Onodera C.S."/>
            <person name="Deng J.M."/>
            <person name="Akiyama K."/>
            <person name="Ansari Y."/>
            <person name="Arakawa T."/>
            <person name="Banh J."/>
            <person name="Banno F."/>
            <person name="Bowser L."/>
            <person name="Brooks S.Y."/>
            <person name="Carninci P."/>
            <person name="Chao Q."/>
            <person name="Choy N."/>
            <person name="Enju A."/>
            <person name="Goldsmith A.D."/>
            <person name="Gurjal M."/>
            <person name="Hansen N.F."/>
            <person name="Hayashizaki Y."/>
            <person name="Johnson-Hopson C."/>
            <person name="Hsuan V.W."/>
            <person name="Iida K."/>
            <person name="Karnes M."/>
            <person name="Khan S."/>
            <person name="Koesema E."/>
            <person name="Ishida J."/>
            <person name="Jiang P.X."/>
            <person name="Jones T."/>
            <person name="Kawai J."/>
            <person name="Kamiya A."/>
            <person name="Meyers C."/>
            <person name="Nakajima M."/>
            <person name="Narusaka M."/>
            <person name="Seki M."/>
            <person name="Sakurai T."/>
            <person name="Satou M."/>
            <person name="Tamse R."/>
            <person name="Vaysberg M."/>
            <person name="Wallender E.K."/>
            <person name="Wong C."/>
            <person name="Yamamura Y."/>
            <person name="Yuan S."/>
            <person name="Shinozaki K."/>
            <person name="Davis R.W."/>
            <person name="Theologis A."/>
            <person name="Ecker J.R."/>
        </authorList>
    </citation>
    <scope>NUCLEOTIDE SEQUENCE [LARGE SCALE MRNA]</scope>
    <source>
        <strain>cv. Columbia</strain>
    </source>
</reference>
<reference key="5">
    <citation type="journal article" date="2001" name="Proc. Natl. Acad. Sci. U.S.A.">
        <title>A domain unique to plant RanGAP is responsible for its targeting to the plant nuclear rim.</title>
        <authorList>
            <person name="Rose A."/>
            <person name="Meier I."/>
        </authorList>
    </citation>
    <scope>MUTAGENESIS OF 18-TRP-PRO-19</scope>
    <scope>SUBCELLULAR LOCATION</scope>
    <scope>DOMAIN WPP</scope>
</reference>
<reference key="6">
    <citation type="journal article" date="2007" name="Curr. Biol.">
        <title>Anchorage of plant RanGAP to the nuclear envelope involves novel nuclear-pore-associated proteins.</title>
        <authorList>
            <person name="Xu X.M."/>
            <person name="Meulia T."/>
            <person name="Meier I."/>
        </authorList>
    </citation>
    <scope>INTERACTION WITH WIP1; WIP2 AND WIP3</scope>
    <scope>SUBCELLULAR LOCATION</scope>
</reference>
<reference key="7">
    <citation type="journal article" date="2008" name="Plant Cell">
        <title>Two distinct interacting classes of nuclear envelope-associated coiled-coil proteins are required for the tissue-specific nuclear envelope targeting of Arabidopsis RanGAP.</title>
        <authorList>
            <person name="Zhao Q."/>
            <person name="Brkljacic J."/>
            <person name="Meier I."/>
        </authorList>
    </citation>
    <scope>INTERACTION WITH WIT1</scope>
</reference>
<reference key="8">
    <citation type="journal article" date="2008" name="Proc. Natl. Acad. Sci. U.S.A.">
        <title>RanGAP1 is a continuous marker of the Arabidopsis cell division plane.</title>
        <authorList>
            <person name="Xu X.M."/>
            <person name="Zhao Q."/>
            <person name="Rodrigo-Peiris T."/>
            <person name="Brkljacic J."/>
            <person name="He C.S."/>
            <person name="Mueller S."/>
            <person name="Meier I."/>
        </authorList>
    </citation>
    <scope>FUNCTION</scope>
    <scope>SUBCELLULAR LOCATION</scope>
    <scope>INTERACTION WITH POK1</scope>
</reference>
<reference key="9">
    <citation type="journal article" date="2012" name="J. Cell Biol.">
        <title>Novel plant SUN-KASH bridges are involved in RanGAP anchoring and nuclear shape determination.</title>
        <authorList>
            <person name="Zhou X."/>
            <person name="Graumann K."/>
            <person name="Evans D.E."/>
            <person name="Meier I."/>
        </authorList>
    </citation>
    <scope>SUBCELLULAR LOCATION</scope>
    <source>
        <strain>cv. Columbia</strain>
    </source>
</reference>
<keyword id="KW-0963">Cytoplasm</keyword>
<keyword id="KW-0206">Cytoskeleton</keyword>
<keyword id="KW-0343">GTPase activation</keyword>
<keyword id="KW-0433">Leucine-rich repeat</keyword>
<keyword id="KW-0472">Membrane</keyword>
<keyword id="KW-0539">Nucleus</keyword>
<keyword id="KW-1185">Reference proteome</keyword>
<keyword id="KW-0677">Repeat</keyword>